<keyword id="KW-0002">3D-structure</keyword>
<keyword id="KW-0963">Cytoplasm</keyword>
<keyword id="KW-0217">Developmental protein</keyword>
<keyword id="KW-0221">Differentiation</keyword>
<keyword id="KW-0903">Direct protein sequencing</keyword>
<keyword id="KW-1015">Disulfide bond</keyword>
<keyword id="KW-0249">Electron transport</keyword>
<keyword id="KW-0256">Endoplasmic reticulum</keyword>
<keyword id="KW-0274">FAD</keyword>
<keyword id="KW-0285">Flavoprotein</keyword>
<keyword id="KW-0488">Methylation</keyword>
<keyword id="KW-0492">Microsome</keyword>
<keyword id="KW-0521">NADP</keyword>
<keyword id="KW-0539">Nucleus</keyword>
<keyword id="KW-0560">Oxidoreductase</keyword>
<keyword id="KW-0597">Phosphoprotein</keyword>
<keyword id="KW-0676">Redox-active center</keyword>
<keyword id="KW-1185">Reference proteome</keyword>
<keyword id="KW-0712">Selenocysteine</keyword>
<keyword id="KW-0744">Spermatogenesis</keyword>
<keyword id="KW-0813">Transport</keyword>
<comment type="function">
    <text evidence="8 9">Displays thioredoxin reductase, glutaredoxin and glutathione reductase activities. Catalyzes disulfide bond isomerization. Promotes disulfide bond formation between GPX4 and various sperm proteins and may play a role in sperm maturation by promoting formation of sperm structural components.</text>
</comment>
<comment type="catalytic activity">
    <reaction evidence="8">
        <text>[thioredoxin]-dithiol + NADP(+) = [thioredoxin]-disulfide + NADPH + H(+)</text>
        <dbReference type="Rhea" id="RHEA:20345"/>
        <dbReference type="Rhea" id="RHEA-COMP:10698"/>
        <dbReference type="Rhea" id="RHEA-COMP:10700"/>
        <dbReference type="ChEBI" id="CHEBI:15378"/>
        <dbReference type="ChEBI" id="CHEBI:29950"/>
        <dbReference type="ChEBI" id="CHEBI:50058"/>
        <dbReference type="ChEBI" id="CHEBI:57783"/>
        <dbReference type="ChEBI" id="CHEBI:58349"/>
        <dbReference type="EC" id="1.8.1.9"/>
    </reaction>
</comment>
<comment type="cofactor">
    <cofactor evidence="2">
        <name>FAD</name>
        <dbReference type="ChEBI" id="CHEBI:57692"/>
    </cofactor>
    <text evidence="2">Binds 1 FAD per subunit.</text>
</comment>
<comment type="biophysicochemical properties">
    <kinetics>
        <KM evidence="8">14.7 uM for 5,5'-dithiobis(2-nitrobenzoic acid)</KM>
        <KM evidence="8">10.7 uM for NADPH</KM>
        <KM evidence="8">3 uM for thioredoxin</KM>
        <KM evidence="8">8.84 uM for oxidized glutathione</KM>
        <KM evidence="8">45.2 uM for beta-hydroxyethyl disulfide</KM>
    </kinetics>
</comment>
<comment type="subunit">
    <text evidence="2">Homodimer.</text>
</comment>
<comment type="subcellular location">
    <subcellularLocation>
        <location evidence="8 9">Cytoplasm</location>
    </subcellularLocation>
    <subcellularLocation>
        <location evidence="8 9">Nucleus</location>
    </subcellularLocation>
    <subcellularLocation>
        <location evidence="8 9">Microsome</location>
    </subcellularLocation>
    <subcellularLocation>
        <location>Endoplasmic reticulum</location>
    </subcellularLocation>
    <text evidence="8 9">Detected in cytoplasm and nucleus in late spermatids.</text>
</comment>
<comment type="tissue specificity">
    <text evidence="7 9 11">Expressed preferentially in testis where it is found in spermatids and spermatocytes but not in sperm. In elongating spermatids, expressed at the site of mitochondrial sheath formation. Low levels in other tissues including heart, lung, liver, kidney, brain, muscle and prostate.</text>
</comment>
<comment type="developmental stage">
    <text evidence="9">Accumulates in the testis after puberty. Not detected in 20-day-old mice but highly expressed in testes of 7-month-old mice.</text>
</comment>
<comment type="domain">
    <text evidence="8 10">The N-terminal glutaredoxin domain does not contain the C-X-X-C redox-active motif normally found in glutaredoxins but activity may be mediated through a single cysteine. The C-terminal Cys-Sec motif of one subunit of the homodimer may transfer electrons from the thiol-disulfide center to the glutaredoxin domain of the other subunit.</text>
</comment>
<comment type="miscellaneous">
    <text evidence="3">The thioredoxin reductase active site is a redox-active disulfide bond. The selenocysteine residue is also essential for catalytic activity (By similarity).</text>
</comment>
<comment type="similarity">
    <text evidence="12">Belongs to the class-I pyridine nucleotide-disulfide oxidoreductase family.</text>
</comment>
<comment type="caution">
    <text evidence="13">This sequence initiates at a CTG codon.</text>
</comment>
<comment type="sequence caution" evidence="12">
    <conflict type="erroneous termination">
        <sequence resource="EMBL-CDS" id="AAH76605"/>
    </conflict>
    <text>Truncated C-terminus.</text>
</comment>
<comment type="sequence caution" evidence="12">
    <conflict type="miscellaneous discrepancy">
        <sequence resource="EMBL-CDS" id="AAH76605"/>
    </conflict>
    <text>Unusual initiator. The initiator methionine is coded by a non-canonical CTG leucine codon.</text>
</comment>
<comment type="sequence caution" evidence="12">
    <conflict type="erroneous initiation">
        <sequence resource="EMBL-CDS" id="AAK31172"/>
    </conflict>
</comment>
<comment type="sequence caution" evidence="12">
    <conflict type="erroneous termination">
        <sequence resource="EMBL-CDS" id="BAB28419"/>
    </conflict>
    <text>Truncated C-terminus.</text>
</comment>
<comment type="sequence caution" evidence="12">
    <conflict type="frameshift">
        <sequence resource="EMBL-CDS" id="BAB28419"/>
    </conflict>
</comment>
<comment type="sequence caution" evidence="12">
    <conflict type="miscellaneous discrepancy">
        <sequence resource="EMBL-CDS" id="BAB28419"/>
    </conflict>
    <text>Unusual initiator. The initiator methionine is coded by a non-canonical CTG leucine codon.</text>
</comment>
<comment type="sequence caution" evidence="12">
    <conflict type="erroneous termination">
        <sequence resource="EMBL-CDS" id="BAC37890"/>
    </conflict>
    <text>Truncated C-terminus.</text>
</comment>
<comment type="sequence caution" evidence="12">
    <conflict type="miscellaneous discrepancy">
        <sequence resource="EMBL-CDS" id="BAC37890"/>
    </conflict>
    <text>Unusual initiator. The initiator methionine is coded by a non-canonical CTG leucine codon.</text>
</comment>
<dbReference type="EC" id="1.8.1.9"/>
<dbReference type="EMBL" id="AF349659">
    <property type="protein sequence ID" value="AAK31172.1"/>
    <property type="status" value="ALT_INIT"/>
    <property type="molecule type" value="mRNA"/>
</dbReference>
<dbReference type="EMBL" id="AK012699">
    <property type="protein sequence ID" value="BAB28419.1"/>
    <property type="status" value="ALT_SEQ"/>
    <property type="molecule type" value="mRNA"/>
</dbReference>
<dbReference type="EMBL" id="AK080362">
    <property type="protein sequence ID" value="BAC37890.1"/>
    <property type="status" value="ALT_SEQ"/>
    <property type="molecule type" value="mRNA"/>
</dbReference>
<dbReference type="EMBL" id="BC076605">
    <property type="protein sequence ID" value="AAH76605.1"/>
    <property type="status" value="ALT_SEQ"/>
    <property type="molecule type" value="mRNA"/>
</dbReference>
<dbReference type="RefSeq" id="NP_001171529.1">
    <property type="nucleotide sequence ID" value="NM_001178058.2"/>
</dbReference>
<dbReference type="RefSeq" id="NP_694802.2">
    <property type="nucleotide sequence ID" value="NM_153162.3"/>
</dbReference>
<dbReference type="PDB" id="2LV3">
    <property type="method" value="NMR"/>
    <property type="chains" value="A=44-161"/>
</dbReference>
<dbReference type="PDBsum" id="2LV3"/>
<dbReference type="BMRB" id="Q99MD6"/>
<dbReference type="SMR" id="Q99MD6"/>
<dbReference type="FunCoup" id="Q99MD6">
    <property type="interactions" value="742"/>
</dbReference>
<dbReference type="STRING" id="10090.ENSMUSP00000000828"/>
<dbReference type="GlyGen" id="Q99MD6">
    <property type="glycosylation" value="2 sites, 1 O-linked glycan (1 site)"/>
</dbReference>
<dbReference type="iPTMnet" id="Q99MD6"/>
<dbReference type="PhosphoSitePlus" id="Q99MD6"/>
<dbReference type="SwissPalm" id="Q99MD6"/>
<dbReference type="jPOST" id="Q99MD6"/>
<dbReference type="PaxDb" id="10090-ENSMUSP00000000828"/>
<dbReference type="PeptideAtlas" id="Q99MD6"/>
<dbReference type="ProteomicsDB" id="297530"/>
<dbReference type="Pumba" id="Q99MD6"/>
<dbReference type="DNASU" id="232223"/>
<dbReference type="GeneID" id="232223"/>
<dbReference type="KEGG" id="mmu:232223"/>
<dbReference type="UCSC" id="uc009cwj.1">
    <property type="organism name" value="mouse"/>
</dbReference>
<dbReference type="AGR" id="MGI:2386711"/>
<dbReference type="CTD" id="114112"/>
<dbReference type="MGI" id="MGI:2386711">
    <property type="gene designation" value="Txnrd3"/>
</dbReference>
<dbReference type="eggNOG" id="KOG1752">
    <property type="taxonomic scope" value="Eukaryota"/>
</dbReference>
<dbReference type="eggNOG" id="KOG4716">
    <property type="taxonomic scope" value="Eukaryota"/>
</dbReference>
<dbReference type="InParanoid" id="Q99MD6"/>
<dbReference type="OrthoDB" id="40053at9989"/>
<dbReference type="BRENDA" id="1.8.1.B1">
    <property type="organism ID" value="3474"/>
</dbReference>
<dbReference type="SABIO-RK" id="Q99MD6"/>
<dbReference type="BioGRID-ORCS" id="232223">
    <property type="hits" value="3 hits in 77 CRISPR screens"/>
</dbReference>
<dbReference type="EvolutionaryTrace" id="Q99MD6"/>
<dbReference type="PRO" id="PR:Q99MD6"/>
<dbReference type="Proteomes" id="UP000000589">
    <property type="component" value="Unplaced"/>
</dbReference>
<dbReference type="RNAct" id="Q99MD6">
    <property type="molecule type" value="protein"/>
</dbReference>
<dbReference type="GO" id="GO:0005783">
    <property type="term" value="C:endoplasmic reticulum"/>
    <property type="evidence" value="ECO:0007669"/>
    <property type="project" value="UniProtKB-SubCell"/>
</dbReference>
<dbReference type="GO" id="GO:0005634">
    <property type="term" value="C:nucleus"/>
    <property type="evidence" value="ECO:0007669"/>
    <property type="project" value="UniProtKB-SubCell"/>
</dbReference>
<dbReference type="GO" id="GO:0050660">
    <property type="term" value="F:flavin adenine dinucleotide binding"/>
    <property type="evidence" value="ECO:0007669"/>
    <property type="project" value="InterPro"/>
</dbReference>
<dbReference type="GO" id="GO:0004791">
    <property type="term" value="F:thioredoxin-disulfide reductase (NADPH) activity"/>
    <property type="evidence" value="ECO:0000314"/>
    <property type="project" value="MGI"/>
</dbReference>
<dbReference type="GO" id="GO:0001825">
    <property type="term" value="P:blastocyst formation"/>
    <property type="evidence" value="ECO:0000315"/>
    <property type="project" value="MGI"/>
</dbReference>
<dbReference type="GO" id="GO:0030154">
    <property type="term" value="P:cell differentiation"/>
    <property type="evidence" value="ECO:0007669"/>
    <property type="project" value="UniProtKB-KW"/>
</dbReference>
<dbReference type="GO" id="GO:0045454">
    <property type="term" value="P:cell redox homeostasis"/>
    <property type="evidence" value="ECO:0007669"/>
    <property type="project" value="InterPro"/>
</dbReference>
<dbReference type="GO" id="GO:0006749">
    <property type="term" value="P:glutathione metabolic process"/>
    <property type="evidence" value="ECO:0000314"/>
    <property type="project" value="MGI"/>
</dbReference>
<dbReference type="GO" id="GO:0007283">
    <property type="term" value="P:spermatogenesis"/>
    <property type="evidence" value="ECO:0007669"/>
    <property type="project" value="UniProtKB-KW"/>
</dbReference>
<dbReference type="CDD" id="cd03419">
    <property type="entry name" value="GRX_GRXh_1_2_like"/>
    <property type="match status" value="1"/>
</dbReference>
<dbReference type="FunFam" id="3.50.50.60:FF:000190">
    <property type="entry name" value="Thioredoxin reductase"/>
    <property type="match status" value="1"/>
</dbReference>
<dbReference type="FunFam" id="3.30.390.30:FF:000004">
    <property type="entry name" value="Thioredoxin reductase 1, cytoplasmic"/>
    <property type="match status" value="1"/>
</dbReference>
<dbReference type="FunFam" id="3.40.30.10:FF:000161">
    <property type="entry name" value="Thioredoxin reductase 3"/>
    <property type="match status" value="1"/>
</dbReference>
<dbReference type="Gene3D" id="3.30.390.30">
    <property type="match status" value="1"/>
</dbReference>
<dbReference type="Gene3D" id="3.50.50.60">
    <property type="entry name" value="FAD/NAD(P)-binding domain"/>
    <property type="match status" value="2"/>
</dbReference>
<dbReference type="Gene3D" id="3.40.30.10">
    <property type="entry name" value="Glutaredoxin"/>
    <property type="match status" value="1"/>
</dbReference>
<dbReference type="InterPro" id="IPR036188">
    <property type="entry name" value="FAD/NAD-bd_sf"/>
</dbReference>
<dbReference type="InterPro" id="IPR023753">
    <property type="entry name" value="FAD/NAD-binding_dom"/>
</dbReference>
<dbReference type="InterPro" id="IPR016156">
    <property type="entry name" value="FAD/NAD-linked_Rdtase_dimer_sf"/>
</dbReference>
<dbReference type="InterPro" id="IPR002109">
    <property type="entry name" value="Glutaredoxin"/>
</dbReference>
<dbReference type="InterPro" id="IPR011899">
    <property type="entry name" value="Glutaredoxin_euk/vir"/>
</dbReference>
<dbReference type="InterPro" id="IPR046952">
    <property type="entry name" value="GSHR/TRXR-like"/>
</dbReference>
<dbReference type="InterPro" id="IPR004099">
    <property type="entry name" value="Pyr_nucl-diS_OxRdtase_dimer"/>
</dbReference>
<dbReference type="InterPro" id="IPR012999">
    <property type="entry name" value="Pyr_OxRdtase_I_AS"/>
</dbReference>
<dbReference type="InterPro" id="IPR036249">
    <property type="entry name" value="Thioredoxin-like_sf"/>
</dbReference>
<dbReference type="InterPro" id="IPR006338">
    <property type="entry name" value="Thioredoxin/glutathione_Rdtase"/>
</dbReference>
<dbReference type="NCBIfam" id="TIGR02180">
    <property type="entry name" value="GRX_euk"/>
    <property type="match status" value="1"/>
</dbReference>
<dbReference type="NCBIfam" id="TIGR01438">
    <property type="entry name" value="TGR"/>
    <property type="match status" value="1"/>
</dbReference>
<dbReference type="PANTHER" id="PTHR42737">
    <property type="entry name" value="GLUTATHIONE REDUCTASE"/>
    <property type="match status" value="1"/>
</dbReference>
<dbReference type="PANTHER" id="PTHR42737:SF6">
    <property type="entry name" value="THIOREDOXIN-DISULFIDE REDUCTASE"/>
    <property type="match status" value="1"/>
</dbReference>
<dbReference type="Pfam" id="PF00462">
    <property type="entry name" value="Glutaredoxin"/>
    <property type="match status" value="1"/>
</dbReference>
<dbReference type="Pfam" id="PF07992">
    <property type="entry name" value="Pyr_redox_2"/>
    <property type="match status" value="1"/>
</dbReference>
<dbReference type="Pfam" id="PF02852">
    <property type="entry name" value="Pyr_redox_dim"/>
    <property type="match status" value="1"/>
</dbReference>
<dbReference type="PRINTS" id="PR00368">
    <property type="entry name" value="FADPNR"/>
</dbReference>
<dbReference type="PRINTS" id="PR00411">
    <property type="entry name" value="PNDRDTASEI"/>
</dbReference>
<dbReference type="SUPFAM" id="SSF51905">
    <property type="entry name" value="FAD/NAD(P)-binding domain"/>
    <property type="match status" value="1"/>
</dbReference>
<dbReference type="SUPFAM" id="SSF55424">
    <property type="entry name" value="FAD/NAD-linked reductases, dimerisation (C-terminal) domain"/>
    <property type="match status" value="1"/>
</dbReference>
<dbReference type="SUPFAM" id="SSF52833">
    <property type="entry name" value="Thioredoxin-like"/>
    <property type="match status" value="1"/>
</dbReference>
<dbReference type="PROSITE" id="PS51354">
    <property type="entry name" value="GLUTAREDOXIN_2"/>
    <property type="match status" value="1"/>
</dbReference>
<dbReference type="PROSITE" id="PS00076">
    <property type="entry name" value="PYRIDINE_REDOX_1"/>
    <property type="match status" value="1"/>
</dbReference>
<name>TRXR3_MOUSE</name>
<proteinExistence type="evidence at protein level"/>
<protein>
    <recommendedName>
        <fullName>Thioredoxin reductase 3</fullName>
        <ecNumber>1.8.1.9</ecNumber>
    </recommendedName>
    <alternativeName>
        <fullName>Thioredoxin and glutathione reductase</fullName>
    </alternativeName>
    <alternativeName>
        <fullName>Thioredoxin reductase TR2</fullName>
    </alternativeName>
</protein>
<organism>
    <name type="scientific">Mus musculus</name>
    <name type="common">Mouse</name>
    <dbReference type="NCBI Taxonomy" id="10090"/>
    <lineage>
        <taxon>Eukaryota</taxon>
        <taxon>Metazoa</taxon>
        <taxon>Chordata</taxon>
        <taxon>Craniata</taxon>
        <taxon>Vertebrata</taxon>
        <taxon>Euteleostomi</taxon>
        <taxon>Mammalia</taxon>
        <taxon>Eutheria</taxon>
        <taxon>Euarchontoglires</taxon>
        <taxon>Glires</taxon>
        <taxon>Rodentia</taxon>
        <taxon>Myomorpha</taxon>
        <taxon>Muroidea</taxon>
        <taxon>Muridae</taxon>
        <taxon>Murinae</taxon>
        <taxon>Mus</taxon>
        <taxon>Mus</taxon>
    </lineage>
</organism>
<reference evidence="12 15" key="1">
    <citation type="journal article" date="2001" name="Proc. Natl. Acad. Sci. U.S.A.">
        <title>Selenoprotein oxidoreductase with specificity for thioredoxin and glutathione systems.</title>
        <authorList>
            <person name="Sun Q.-A."/>
            <person name="Kirnarsky L."/>
            <person name="Sherman S."/>
            <person name="Gladyshev V.N."/>
        </authorList>
    </citation>
    <scope>NUCLEOTIDE SEQUENCE [MRNA]</scope>
    <scope>FUNCTION</scope>
    <scope>BIOPHYSICOCHEMICAL PROPERTIES</scope>
    <scope>SUBCELLULAR LOCATION</scope>
    <scope>DOMAIN</scope>
    <scope>3D-STRUCTURE MODELING</scope>
    <scope>SELENOCYSTEINE AT SEC-651</scope>
</reference>
<reference evidence="16" key="2">
    <citation type="journal article" date="2005" name="Science">
        <title>The transcriptional landscape of the mammalian genome.</title>
        <authorList>
            <person name="Carninci P."/>
            <person name="Kasukawa T."/>
            <person name="Katayama S."/>
            <person name="Gough J."/>
            <person name="Frith M.C."/>
            <person name="Maeda N."/>
            <person name="Oyama R."/>
            <person name="Ravasi T."/>
            <person name="Lenhard B."/>
            <person name="Wells C."/>
            <person name="Kodzius R."/>
            <person name="Shimokawa K."/>
            <person name="Bajic V.B."/>
            <person name="Brenner S.E."/>
            <person name="Batalov S."/>
            <person name="Forrest A.R."/>
            <person name="Zavolan M."/>
            <person name="Davis M.J."/>
            <person name="Wilming L.G."/>
            <person name="Aidinis V."/>
            <person name="Allen J.E."/>
            <person name="Ambesi-Impiombato A."/>
            <person name="Apweiler R."/>
            <person name="Aturaliya R.N."/>
            <person name="Bailey T.L."/>
            <person name="Bansal M."/>
            <person name="Baxter L."/>
            <person name="Beisel K.W."/>
            <person name="Bersano T."/>
            <person name="Bono H."/>
            <person name="Chalk A.M."/>
            <person name="Chiu K.P."/>
            <person name="Choudhary V."/>
            <person name="Christoffels A."/>
            <person name="Clutterbuck D.R."/>
            <person name="Crowe M.L."/>
            <person name="Dalla E."/>
            <person name="Dalrymple B.P."/>
            <person name="de Bono B."/>
            <person name="Della Gatta G."/>
            <person name="di Bernardo D."/>
            <person name="Down T."/>
            <person name="Engstrom P."/>
            <person name="Fagiolini M."/>
            <person name="Faulkner G."/>
            <person name="Fletcher C.F."/>
            <person name="Fukushima T."/>
            <person name="Furuno M."/>
            <person name="Futaki S."/>
            <person name="Gariboldi M."/>
            <person name="Georgii-Hemming P."/>
            <person name="Gingeras T.R."/>
            <person name="Gojobori T."/>
            <person name="Green R.E."/>
            <person name="Gustincich S."/>
            <person name="Harbers M."/>
            <person name="Hayashi Y."/>
            <person name="Hensch T.K."/>
            <person name="Hirokawa N."/>
            <person name="Hill D."/>
            <person name="Huminiecki L."/>
            <person name="Iacono M."/>
            <person name="Ikeo K."/>
            <person name="Iwama A."/>
            <person name="Ishikawa T."/>
            <person name="Jakt M."/>
            <person name="Kanapin A."/>
            <person name="Katoh M."/>
            <person name="Kawasawa Y."/>
            <person name="Kelso J."/>
            <person name="Kitamura H."/>
            <person name="Kitano H."/>
            <person name="Kollias G."/>
            <person name="Krishnan S.P."/>
            <person name="Kruger A."/>
            <person name="Kummerfeld S.K."/>
            <person name="Kurochkin I.V."/>
            <person name="Lareau L.F."/>
            <person name="Lazarevic D."/>
            <person name="Lipovich L."/>
            <person name="Liu J."/>
            <person name="Liuni S."/>
            <person name="McWilliam S."/>
            <person name="Madan Babu M."/>
            <person name="Madera M."/>
            <person name="Marchionni L."/>
            <person name="Matsuda H."/>
            <person name="Matsuzawa S."/>
            <person name="Miki H."/>
            <person name="Mignone F."/>
            <person name="Miyake S."/>
            <person name="Morris K."/>
            <person name="Mottagui-Tabar S."/>
            <person name="Mulder N."/>
            <person name="Nakano N."/>
            <person name="Nakauchi H."/>
            <person name="Ng P."/>
            <person name="Nilsson R."/>
            <person name="Nishiguchi S."/>
            <person name="Nishikawa S."/>
            <person name="Nori F."/>
            <person name="Ohara O."/>
            <person name="Okazaki Y."/>
            <person name="Orlando V."/>
            <person name="Pang K.C."/>
            <person name="Pavan W.J."/>
            <person name="Pavesi G."/>
            <person name="Pesole G."/>
            <person name="Petrovsky N."/>
            <person name="Piazza S."/>
            <person name="Reed J."/>
            <person name="Reid J.F."/>
            <person name="Ring B.Z."/>
            <person name="Ringwald M."/>
            <person name="Rost B."/>
            <person name="Ruan Y."/>
            <person name="Salzberg S.L."/>
            <person name="Sandelin A."/>
            <person name="Schneider C."/>
            <person name="Schoenbach C."/>
            <person name="Sekiguchi K."/>
            <person name="Semple C.A."/>
            <person name="Seno S."/>
            <person name="Sessa L."/>
            <person name="Sheng Y."/>
            <person name="Shibata Y."/>
            <person name="Shimada H."/>
            <person name="Shimada K."/>
            <person name="Silva D."/>
            <person name="Sinclair B."/>
            <person name="Sperling S."/>
            <person name="Stupka E."/>
            <person name="Sugiura K."/>
            <person name="Sultana R."/>
            <person name="Takenaka Y."/>
            <person name="Taki K."/>
            <person name="Tammoja K."/>
            <person name="Tan S.L."/>
            <person name="Tang S."/>
            <person name="Taylor M.S."/>
            <person name="Tegner J."/>
            <person name="Teichmann S.A."/>
            <person name="Ueda H.R."/>
            <person name="van Nimwegen E."/>
            <person name="Verardo R."/>
            <person name="Wei C.L."/>
            <person name="Yagi K."/>
            <person name="Yamanishi H."/>
            <person name="Zabarovsky E."/>
            <person name="Zhu S."/>
            <person name="Zimmer A."/>
            <person name="Hide W."/>
            <person name="Bult C."/>
            <person name="Grimmond S.M."/>
            <person name="Teasdale R.D."/>
            <person name="Liu E.T."/>
            <person name="Brusic V."/>
            <person name="Quackenbush J."/>
            <person name="Wahlestedt C."/>
            <person name="Mattick J.S."/>
            <person name="Hume D.A."/>
            <person name="Kai C."/>
            <person name="Sasaki D."/>
            <person name="Tomaru Y."/>
            <person name="Fukuda S."/>
            <person name="Kanamori-Katayama M."/>
            <person name="Suzuki M."/>
            <person name="Aoki J."/>
            <person name="Arakawa T."/>
            <person name="Iida J."/>
            <person name="Imamura K."/>
            <person name="Itoh M."/>
            <person name="Kato T."/>
            <person name="Kawaji H."/>
            <person name="Kawagashira N."/>
            <person name="Kawashima T."/>
            <person name="Kojima M."/>
            <person name="Kondo S."/>
            <person name="Konno H."/>
            <person name="Nakano K."/>
            <person name="Ninomiya N."/>
            <person name="Nishio T."/>
            <person name="Okada M."/>
            <person name="Plessy C."/>
            <person name="Shibata K."/>
            <person name="Shiraki T."/>
            <person name="Suzuki S."/>
            <person name="Tagami M."/>
            <person name="Waki K."/>
            <person name="Watahiki A."/>
            <person name="Okamura-Oho Y."/>
            <person name="Suzuki H."/>
            <person name="Kawai J."/>
            <person name="Hayashizaki Y."/>
        </authorList>
    </citation>
    <scope>NUCLEOTIDE SEQUENCE [LARGE SCALE MRNA]</scope>
    <source>
        <strain evidence="16">C57BL/6J</strain>
        <tissue evidence="16">Embryo</tissue>
        <tissue evidence="17">Thymus</tissue>
    </source>
</reference>
<reference evidence="12 14" key="3">
    <citation type="journal article" date="2004" name="Genome Res.">
        <title>The status, quality, and expansion of the NIH full-length cDNA project: the Mammalian Gene Collection (MGC).</title>
        <authorList>
            <consortium name="The MGC Project Team"/>
        </authorList>
    </citation>
    <scope>NUCLEOTIDE SEQUENCE [LARGE SCALE MRNA]</scope>
    <source>
        <strain evidence="14">C57BL/6J</strain>
        <tissue evidence="14">Brain</tissue>
    </source>
</reference>
<reference evidence="12" key="4">
    <citation type="journal article" date="1999" name="J. Biol. Chem.">
        <title>Redox regulation of cell signaling by selenocysteine in mammalian thioredoxin reductases.</title>
        <authorList>
            <person name="Sun Q.-A."/>
            <person name="Wu Y."/>
            <person name="Zappacosta F."/>
            <person name="Jeang K.-T."/>
            <person name="Lee B.J."/>
            <person name="Hatfield D.L."/>
            <person name="Gladyshev V.N."/>
        </authorList>
    </citation>
    <scope>PROTEIN SEQUENCE OF 191-202 AND 550-561</scope>
    <scope>TISSUE SPECIFICITY</scope>
</reference>
<reference evidence="12" key="5">
    <citation type="journal article" date="2005" name="Biochemistry">
        <title>Reaction mechanism and regulation of mammalian thioredoxin/glutathione reductase.</title>
        <authorList>
            <person name="Sun Q.-A."/>
            <person name="Su D."/>
            <person name="Novoselov S.V."/>
            <person name="Carlson B.A."/>
            <person name="Hatfield D.L."/>
            <person name="Gladyshev V.N."/>
        </authorList>
    </citation>
    <scope>DOMAIN</scope>
    <scope>MUTAGENESIS OF SEC-651 AND 651-SEC-GLY-652</scope>
</reference>
<reference evidence="12" key="6">
    <citation type="journal article" date="2005" name="J. Biol. Chem.">
        <title>Mammalian selenoprotein thioredoxin-glutathione reductase. Roles in disulfide bond formation and sperm maturation.</title>
        <authorList>
            <person name="Su D."/>
            <person name="Novoselov S.V."/>
            <person name="Sun Q.-A."/>
            <person name="Moustafa M.E."/>
            <person name="Zhou Y."/>
            <person name="Oko R."/>
            <person name="Hatfield D.L."/>
            <person name="Gladyshev V.N."/>
        </authorList>
    </citation>
    <scope>FUNCTION</scope>
    <scope>SUBCELLULAR LOCATION</scope>
    <scope>TISSUE SPECIFICITY</scope>
    <scope>DEVELOPMENTAL STAGE</scope>
</reference>
<reference key="7">
    <citation type="journal article" date="2010" name="Cell">
        <title>A tissue-specific atlas of mouse protein phosphorylation and expression.</title>
        <authorList>
            <person name="Huttlin E.L."/>
            <person name="Jedrychowski M.P."/>
            <person name="Elias J.E."/>
            <person name="Goswami T."/>
            <person name="Rad R."/>
            <person name="Beausoleil S.A."/>
            <person name="Villen J."/>
            <person name="Haas W."/>
            <person name="Sowa M.E."/>
            <person name="Gygi S.P."/>
        </authorList>
    </citation>
    <scope>IDENTIFICATION BY MASS SPECTROMETRY [LARGE SCALE ANALYSIS]</scope>
    <source>
        <tissue>Heart</tissue>
        <tissue>Kidney</tissue>
        <tissue>Lung</tissue>
        <tissue>Pancreas</tissue>
        <tissue>Testis</tissue>
    </source>
</reference>
<reference key="8">
    <citation type="journal article" date="2010" name="J. Biol. Chem.">
        <title>CUG start codon generates thioredoxin/glutathione reductase isoforms in mouse testes.</title>
        <authorList>
            <person name="Gerashchenko M.V."/>
            <person name="Su D."/>
            <person name="Gladyshev V.N."/>
        </authorList>
    </citation>
    <scope>NON-AUG INITIATOR START CODON</scope>
    <scope>TISSUE SPECIFICITY</scope>
</reference>
<reference key="9">
    <citation type="journal article" date="2013" name="Mol. Cell">
        <title>SIRT5-mediated lysine desuccinylation impacts diverse metabolic pathways.</title>
        <authorList>
            <person name="Park J."/>
            <person name="Chen Y."/>
            <person name="Tishkoff D.X."/>
            <person name="Peng C."/>
            <person name="Tan M."/>
            <person name="Dai L."/>
            <person name="Xie Z."/>
            <person name="Zhang Y."/>
            <person name="Zwaans B.M."/>
            <person name="Skinner M.E."/>
            <person name="Lombard D.B."/>
            <person name="Zhao Y."/>
        </authorList>
    </citation>
    <scope>SUCCINYLATION [LARGE SCALE ANALYSIS] AT LYS-388</scope>
    <scope>IDENTIFICATION BY MASS SPECTROMETRY [LARGE SCALE ANALYSIS]</scope>
    <source>
        <tissue>Liver</tissue>
    </source>
</reference>
<reference key="10">
    <citation type="journal article" date="2014" name="Mol. Cell. Proteomics">
        <title>Immunoaffinity enrichment and mass spectrometry analysis of protein methylation.</title>
        <authorList>
            <person name="Guo A."/>
            <person name="Gu H."/>
            <person name="Zhou J."/>
            <person name="Mulhern D."/>
            <person name="Wang Y."/>
            <person name="Lee K.A."/>
            <person name="Yang V."/>
            <person name="Aguiar M."/>
            <person name="Kornhauser J."/>
            <person name="Jia X."/>
            <person name="Ren J."/>
            <person name="Beausoleil S.A."/>
            <person name="Silva J.C."/>
            <person name="Vemulapalli V."/>
            <person name="Bedford M.T."/>
            <person name="Comb M.J."/>
        </authorList>
    </citation>
    <scope>METHYLATION [LARGE SCALE ANALYSIS] AT ARG-34</scope>
    <scope>IDENTIFICATION BY MASS SPECTROMETRY [LARGE SCALE ANALYSIS]</scope>
    <source>
        <tissue>Brain</tissue>
        <tissue>Embryo</tissue>
    </source>
</reference>
<evidence type="ECO:0000250" key="1"/>
<evidence type="ECO:0000250" key="2">
    <source>
        <dbReference type="UniProtKB" id="O89049"/>
    </source>
</evidence>
<evidence type="ECO:0000250" key="3">
    <source>
        <dbReference type="UniProtKB" id="Q16881"/>
    </source>
</evidence>
<evidence type="ECO:0000250" key="4">
    <source>
        <dbReference type="UniProtKB" id="Q86VQ6"/>
    </source>
</evidence>
<evidence type="ECO:0000255" key="5">
    <source>
        <dbReference type="PROSITE-ProRule" id="PRU00686"/>
    </source>
</evidence>
<evidence type="ECO:0000256" key="6">
    <source>
        <dbReference type="SAM" id="MobiDB-lite"/>
    </source>
</evidence>
<evidence type="ECO:0000269" key="7">
    <source>
    </source>
</evidence>
<evidence type="ECO:0000269" key="8">
    <source>
    </source>
</evidence>
<evidence type="ECO:0000269" key="9">
    <source>
    </source>
</evidence>
<evidence type="ECO:0000269" key="10">
    <source>
    </source>
</evidence>
<evidence type="ECO:0000269" key="11">
    <source>
    </source>
</evidence>
<evidence type="ECO:0000305" key="12"/>
<evidence type="ECO:0000305" key="13">
    <source>
    </source>
</evidence>
<evidence type="ECO:0000312" key="14">
    <source>
        <dbReference type="EMBL" id="AAH76605.1"/>
    </source>
</evidence>
<evidence type="ECO:0000312" key="15">
    <source>
        <dbReference type="EMBL" id="AAK31172.1"/>
    </source>
</evidence>
<evidence type="ECO:0000312" key="16">
    <source>
        <dbReference type="EMBL" id="BAB28419.1"/>
    </source>
</evidence>
<evidence type="ECO:0000312" key="17">
    <source>
        <dbReference type="EMBL" id="BAC37890.1"/>
    </source>
</evidence>
<evidence type="ECO:0000312" key="18">
    <source>
        <dbReference type="MGI" id="MGI:2386711"/>
    </source>
</evidence>
<evidence type="ECO:0007744" key="19">
    <source>
    </source>
</evidence>
<evidence type="ECO:0007744" key="20">
    <source>
    </source>
</evidence>
<evidence type="ECO:0007829" key="21">
    <source>
        <dbReference type="PDB" id="2LV3"/>
    </source>
</evidence>
<gene>
    <name evidence="18" type="primary">Txnrd3</name>
    <name evidence="15" type="synonym">Tgr</name>
    <name type="synonym">Trxr3</name>
</gene>
<feature type="chain" id="PRO_0000320696" description="Thioredoxin reductase 3">
    <location>
        <begin position="1"/>
        <end position="652"/>
    </location>
</feature>
<feature type="domain" description="Glutaredoxin" evidence="5">
    <location>
        <begin position="65"/>
        <end position="165"/>
    </location>
</feature>
<feature type="region of interest" description="Disordered" evidence="6">
    <location>
        <begin position="1"/>
        <end position="62"/>
    </location>
</feature>
<feature type="compositionally biased region" description="Pro residues" evidence="6">
    <location>
        <begin position="1"/>
        <end position="12"/>
    </location>
</feature>
<feature type="active site" description="Proton acceptor" evidence="1">
    <location>
        <position position="625"/>
    </location>
</feature>
<feature type="binding site" evidence="1">
    <location>
        <begin position="167"/>
        <end position="196"/>
    </location>
    <ligand>
        <name>FAD</name>
        <dbReference type="ChEBI" id="CHEBI:57692"/>
    </ligand>
</feature>
<feature type="non-standard amino acid" description="Selenocysteine">
    <location>
        <position position="651"/>
    </location>
</feature>
<feature type="modified residue" description="Asymmetric dimethylarginine; alternate" evidence="20">
    <location>
        <position position="34"/>
    </location>
</feature>
<feature type="modified residue" description="Omega-N-methylarginine; alternate" evidence="20">
    <location>
        <position position="34"/>
    </location>
</feature>
<feature type="modified residue" description="Phosphoserine" evidence="4">
    <location>
        <position position="50"/>
    </location>
</feature>
<feature type="modified residue" description="N6-succinyllysine" evidence="19">
    <location>
        <position position="388"/>
    </location>
</feature>
<feature type="disulfide bond" description="Redox-active" evidence="1">
    <location>
        <begin position="212"/>
        <end position="217"/>
    </location>
</feature>
<feature type="cross-link" description="Cysteinyl-selenocysteine (Cys-Sec)" evidence="1">
    <location>
        <begin position="650"/>
        <end position="651"/>
    </location>
</feature>
<feature type="mutagenesis site" description="Abolishes thioredoxin reductase, glutaredoxin and gluthioine reductase activities." evidence="10">
    <location>
        <begin position="651"/>
        <end position="652"/>
    </location>
</feature>
<feature type="mutagenesis site" description="Thioredoxin reductase activity reduced to 21%. Glutaredoxin activity reduced to 14%. Glutathione reductase activity reduced to 18%." evidence="10">
    <original>U</original>
    <variation>C</variation>
    <location>
        <position position="651"/>
    </location>
</feature>
<feature type="mutagenesis site" description="Abolishes thioredoxin reductase, glutaredoxin and gluthioine reductase activities." evidence="10">
    <original>U</original>
    <variation>S</variation>
    <location>
        <position position="651"/>
    </location>
</feature>
<feature type="sequence conflict" description="In Ref. 2; BAB28419." evidence="12" ref="2">
    <original>P</original>
    <variation>R</variation>
    <location>
        <position position="8"/>
    </location>
</feature>
<feature type="sequence conflict" description="In Ref. 2; BAB28419." evidence="12" ref="2">
    <original>S</original>
    <variation>W</variation>
    <location>
        <position position="16"/>
    </location>
</feature>
<feature type="helix" evidence="21">
    <location>
        <begin position="61"/>
        <end position="74"/>
    </location>
</feature>
<feature type="strand" evidence="21">
    <location>
        <begin position="75"/>
        <end position="81"/>
    </location>
</feature>
<feature type="turn" evidence="21">
    <location>
        <begin position="86"/>
        <end position="89"/>
    </location>
</feature>
<feature type="helix" evidence="21">
    <location>
        <begin position="90"/>
        <end position="97"/>
    </location>
</feature>
<feature type="strand" evidence="21">
    <location>
        <begin position="103"/>
        <end position="106"/>
    </location>
</feature>
<feature type="turn" evidence="21">
    <location>
        <begin position="107"/>
        <end position="109"/>
    </location>
</feature>
<feature type="helix" evidence="21">
    <location>
        <begin position="113"/>
        <end position="124"/>
    </location>
</feature>
<feature type="strand" evidence="21">
    <location>
        <begin position="126"/>
        <end position="128"/>
    </location>
</feature>
<feature type="strand" evidence="21">
    <location>
        <begin position="133"/>
        <end position="136"/>
    </location>
</feature>
<feature type="helix" evidence="21">
    <location>
        <begin position="144"/>
        <end position="151"/>
    </location>
</feature>
<feature type="helix" evidence="21">
    <location>
        <begin position="155"/>
        <end position="159"/>
    </location>
</feature>
<accession>Q99MD6</accession>
<accession>Q9CZE5</accession>
<sequence length="652" mass="71319">MEKPPSPPPPPRAQTSPGLGKVGVLPNRRLGAVRGGLMSSPPGRRARLASPGTSRPSSEAREELRRRLRDLIEGNRVMIFSKSYCPHSTRVKELFSSLGVVYNILELDQVDDGASVQEVLTEISNQKTVPNIFVNKVHVGGCDRTFQAHQNGLLQKLLQDDSAHDYDLIIIGGGSGGLSCAKEAANLGKKVMVLDFVVPSPQGTTWGLGGTCVNVGCIPKKLMHQAALLGHALQDAKKYGWEYNQQVKHNWEAMTEAIQSHIGSLNWGYRVTLREKGVTYVNSFGEFVDLHKIKATNKKGQETFYTASKFVIATGERPRYLGIQGDKEYCITSDDLFSLPYCPGCTLVVGASYVGLECAGFLAGLGLDVTVMVRSVLLRGFDQEMAEKVGSYLEQQGVKFQRKFTPILVQQLEKGLPGKLKVVAKSTEGPETVEGIYNTVLLAIGRDSCTRKIGLEKIGVKINEKNGKIPVNDVEQTNVPHVYAIGDILDGKPELTPVAIQAGKLLARRLFGVSLEKCDYINIPTTVFTPLEYGCCGLSEEKAIEMYKKENLEVYHTLFWPLEWTVAGRDNNTCYAKIICNKFDNERVVGFHLLGPNAGEITQGFAAAMKCGLTKQLLDDTIGIHPTCGEVFTTLEITKSSGLDITQKGCUG</sequence>